<proteinExistence type="inferred from homology"/>
<accession>B8GLE3</accession>
<sequence length="211" mass="22331">MTETGERLRGLYAVTPDIPTDIEDLRARAEAVLRGGARLLQYRDKSADLPRREQAARALRALCERHGALFIVNDDVALALRVGAHGVHLGQQDMPLAEARAMLGREAIIGITCHERLDLALSAQAAGADYVAFGAVYPSPTKPGAVRAPLPLFTEARETLSIPVCAIGGIEADNAAAVIAAGADMVAVVSGVFARPDPEAEARRLAAMFEV</sequence>
<keyword id="KW-0460">Magnesium</keyword>
<keyword id="KW-0479">Metal-binding</keyword>
<keyword id="KW-1185">Reference proteome</keyword>
<keyword id="KW-0784">Thiamine biosynthesis</keyword>
<keyword id="KW-0808">Transferase</keyword>
<name>THIE_THISH</name>
<feature type="chain" id="PRO_1000198083" description="Thiamine-phosphate synthase">
    <location>
        <begin position="1"/>
        <end position="211"/>
    </location>
</feature>
<feature type="binding site" evidence="1">
    <location>
        <begin position="41"/>
        <end position="45"/>
    </location>
    <ligand>
        <name>4-amino-2-methyl-5-(diphosphooxymethyl)pyrimidine</name>
        <dbReference type="ChEBI" id="CHEBI:57841"/>
    </ligand>
</feature>
<feature type="binding site" evidence="1">
    <location>
        <position position="73"/>
    </location>
    <ligand>
        <name>4-amino-2-methyl-5-(diphosphooxymethyl)pyrimidine</name>
        <dbReference type="ChEBI" id="CHEBI:57841"/>
    </ligand>
</feature>
<feature type="binding site" evidence="1">
    <location>
        <position position="74"/>
    </location>
    <ligand>
        <name>Mg(2+)</name>
        <dbReference type="ChEBI" id="CHEBI:18420"/>
    </ligand>
</feature>
<feature type="binding site" evidence="1">
    <location>
        <position position="93"/>
    </location>
    <ligand>
        <name>Mg(2+)</name>
        <dbReference type="ChEBI" id="CHEBI:18420"/>
    </ligand>
</feature>
<feature type="binding site" evidence="1">
    <location>
        <position position="112"/>
    </location>
    <ligand>
        <name>4-amino-2-methyl-5-(diphosphooxymethyl)pyrimidine</name>
        <dbReference type="ChEBI" id="CHEBI:57841"/>
    </ligand>
</feature>
<feature type="binding site" evidence="1">
    <location>
        <begin position="139"/>
        <end position="141"/>
    </location>
    <ligand>
        <name>2-[(2R,5Z)-2-carboxy-4-methylthiazol-5(2H)-ylidene]ethyl phosphate</name>
        <dbReference type="ChEBI" id="CHEBI:62899"/>
    </ligand>
</feature>
<feature type="binding site" evidence="1">
    <location>
        <position position="142"/>
    </location>
    <ligand>
        <name>4-amino-2-methyl-5-(diphosphooxymethyl)pyrimidine</name>
        <dbReference type="ChEBI" id="CHEBI:57841"/>
    </ligand>
</feature>
<feature type="binding site" evidence="1">
    <location>
        <position position="169"/>
    </location>
    <ligand>
        <name>2-[(2R,5Z)-2-carboxy-4-methylthiazol-5(2H)-ylidene]ethyl phosphate</name>
        <dbReference type="ChEBI" id="CHEBI:62899"/>
    </ligand>
</feature>
<feature type="binding site" evidence="1">
    <location>
        <begin position="189"/>
        <end position="190"/>
    </location>
    <ligand>
        <name>2-[(2R,5Z)-2-carboxy-4-methylthiazol-5(2H)-ylidene]ethyl phosphate</name>
        <dbReference type="ChEBI" id="CHEBI:62899"/>
    </ligand>
</feature>
<dbReference type="EC" id="2.5.1.3" evidence="1"/>
<dbReference type="EMBL" id="CP001339">
    <property type="protein sequence ID" value="ACL73498.1"/>
    <property type="molecule type" value="Genomic_DNA"/>
</dbReference>
<dbReference type="RefSeq" id="WP_012638973.1">
    <property type="nucleotide sequence ID" value="NC_011901.1"/>
</dbReference>
<dbReference type="SMR" id="B8GLE3"/>
<dbReference type="STRING" id="396588.Tgr7_2420"/>
<dbReference type="KEGG" id="tgr:Tgr7_2420"/>
<dbReference type="eggNOG" id="COG0352">
    <property type="taxonomic scope" value="Bacteria"/>
</dbReference>
<dbReference type="HOGENOM" id="CLU_018272_3_1_6"/>
<dbReference type="OrthoDB" id="9789949at2"/>
<dbReference type="UniPathway" id="UPA00060">
    <property type="reaction ID" value="UER00141"/>
</dbReference>
<dbReference type="Proteomes" id="UP000002383">
    <property type="component" value="Chromosome"/>
</dbReference>
<dbReference type="GO" id="GO:0005737">
    <property type="term" value="C:cytoplasm"/>
    <property type="evidence" value="ECO:0007669"/>
    <property type="project" value="TreeGrafter"/>
</dbReference>
<dbReference type="GO" id="GO:0000287">
    <property type="term" value="F:magnesium ion binding"/>
    <property type="evidence" value="ECO:0007669"/>
    <property type="project" value="UniProtKB-UniRule"/>
</dbReference>
<dbReference type="GO" id="GO:0004789">
    <property type="term" value="F:thiamine-phosphate diphosphorylase activity"/>
    <property type="evidence" value="ECO:0007669"/>
    <property type="project" value="UniProtKB-UniRule"/>
</dbReference>
<dbReference type="GO" id="GO:0009228">
    <property type="term" value="P:thiamine biosynthetic process"/>
    <property type="evidence" value="ECO:0007669"/>
    <property type="project" value="UniProtKB-KW"/>
</dbReference>
<dbReference type="GO" id="GO:0009229">
    <property type="term" value="P:thiamine diphosphate biosynthetic process"/>
    <property type="evidence" value="ECO:0007669"/>
    <property type="project" value="UniProtKB-UniRule"/>
</dbReference>
<dbReference type="CDD" id="cd00564">
    <property type="entry name" value="TMP_TenI"/>
    <property type="match status" value="1"/>
</dbReference>
<dbReference type="Gene3D" id="3.20.20.70">
    <property type="entry name" value="Aldolase class I"/>
    <property type="match status" value="1"/>
</dbReference>
<dbReference type="HAMAP" id="MF_00097">
    <property type="entry name" value="TMP_synthase"/>
    <property type="match status" value="1"/>
</dbReference>
<dbReference type="InterPro" id="IPR013785">
    <property type="entry name" value="Aldolase_TIM"/>
</dbReference>
<dbReference type="InterPro" id="IPR036206">
    <property type="entry name" value="ThiamineP_synth_sf"/>
</dbReference>
<dbReference type="InterPro" id="IPR022998">
    <property type="entry name" value="ThiamineP_synth_TenI"/>
</dbReference>
<dbReference type="InterPro" id="IPR034291">
    <property type="entry name" value="TMP_synthase"/>
</dbReference>
<dbReference type="NCBIfam" id="TIGR00693">
    <property type="entry name" value="thiE"/>
    <property type="match status" value="1"/>
</dbReference>
<dbReference type="PANTHER" id="PTHR20857">
    <property type="entry name" value="THIAMINE-PHOSPHATE PYROPHOSPHORYLASE"/>
    <property type="match status" value="1"/>
</dbReference>
<dbReference type="PANTHER" id="PTHR20857:SF15">
    <property type="entry name" value="THIAMINE-PHOSPHATE SYNTHASE"/>
    <property type="match status" value="1"/>
</dbReference>
<dbReference type="Pfam" id="PF02581">
    <property type="entry name" value="TMP-TENI"/>
    <property type="match status" value="1"/>
</dbReference>
<dbReference type="SUPFAM" id="SSF51391">
    <property type="entry name" value="Thiamin phosphate synthase"/>
    <property type="match status" value="1"/>
</dbReference>
<evidence type="ECO:0000255" key="1">
    <source>
        <dbReference type="HAMAP-Rule" id="MF_00097"/>
    </source>
</evidence>
<protein>
    <recommendedName>
        <fullName evidence="1">Thiamine-phosphate synthase</fullName>
        <shortName evidence="1">TP synthase</shortName>
        <shortName evidence="1">TPS</shortName>
        <ecNumber evidence="1">2.5.1.3</ecNumber>
    </recommendedName>
    <alternativeName>
        <fullName evidence="1">Thiamine-phosphate pyrophosphorylase</fullName>
        <shortName evidence="1">TMP pyrophosphorylase</shortName>
        <shortName evidence="1">TMP-PPase</shortName>
    </alternativeName>
</protein>
<organism>
    <name type="scientific">Thioalkalivibrio sulfidiphilus (strain HL-EbGR7)</name>
    <dbReference type="NCBI Taxonomy" id="396588"/>
    <lineage>
        <taxon>Bacteria</taxon>
        <taxon>Pseudomonadati</taxon>
        <taxon>Pseudomonadota</taxon>
        <taxon>Gammaproteobacteria</taxon>
        <taxon>Chromatiales</taxon>
        <taxon>Ectothiorhodospiraceae</taxon>
        <taxon>Thioalkalivibrio</taxon>
    </lineage>
</organism>
<comment type="function">
    <text evidence="1">Condenses 4-methyl-5-(beta-hydroxyethyl)thiazole monophosphate (THZ-P) and 2-methyl-4-amino-5-hydroxymethyl pyrimidine pyrophosphate (HMP-PP) to form thiamine monophosphate (TMP).</text>
</comment>
<comment type="catalytic activity">
    <reaction evidence="1">
        <text>2-[(2R,5Z)-2-carboxy-4-methylthiazol-5(2H)-ylidene]ethyl phosphate + 4-amino-2-methyl-5-(diphosphooxymethyl)pyrimidine + 2 H(+) = thiamine phosphate + CO2 + diphosphate</text>
        <dbReference type="Rhea" id="RHEA:47844"/>
        <dbReference type="ChEBI" id="CHEBI:15378"/>
        <dbReference type="ChEBI" id="CHEBI:16526"/>
        <dbReference type="ChEBI" id="CHEBI:33019"/>
        <dbReference type="ChEBI" id="CHEBI:37575"/>
        <dbReference type="ChEBI" id="CHEBI:57841"/>
        <dbReference type="ChEBI" id="CHEBI:62899"/>
        <dbReference type="EC" id="2.5.1.3"/>
    </reaction>
</comment>
<comment type="catalytic activity">
    <reaction evidence="1">
        <text>2-(2-carboxy-4-methylthiazol-5-yl)ethyl phosphate + 4-amino-2-methyl-5-(diphosphooxymethyl)pyrimidine + 2 H(+) = thiamine phosphate + CO2 + diphosphate</text>
        <dbReference type="Rhea" id="RHEA:47848"/>
        <dbReference type="ChEBI" id="CHEBI:15378"/>
        <dbReference type="ChEBI" id="CHEBI:16526"/>
        <dbReference type="ChEBI" id="CHEBI:33019"/>
        <dbReference type="ChEBI" id="CHEBI:37575"/>
        <dbReference type="ChEBI" id="CHEBI:57841"/>
        <dbReference type="ChEBI" id="CHEBI:62890"/>
        <dbReference type="EC" id="2.5.1.3"/>
    </reaction>
</comment>
<comment type="catalytic activity">
    <reaction evidence="1">
        <text>4-methyl-5-(2-phosphooxyethyl)-thiazole + 4-amino-2-methyl-5-(diphosphooxymethyl)pyrimidine + H(+) = thiamine phosphate + diphosphate</text>
        <dbReference type="Rhea" id="RHEA:22328"/>
        <dbReference type="ChEBI" id="CHEBI:15378"/>
        <dbReference type="ChEBI" id="CHEBI:33019"/>
        <dbReference type="ChEBI" id="CHEBI:37575"/>
        <dbReference type="ChEBI" id="CHEBI:57841"/>
        <dbReference type="ChEBI" id="CHEBI:58296"/>
        <dbReference type="EC" id="2.5.1.3"/>
    </reaction>
</comment>
<comment type="cofactor">
    <cofactor evidence="1">
        <name>Mg(2+)</name>
        <dbReference type="ChEBI" id="CHEBI:18420"/>
    </cofactor>
    <text evidence="1">Binds 1 Mg(2+) ion per subunit.</text>
</comment>
<comment type="pathway">
    <text evidence="1">Cofactor biosynthesis; thiamine diphosphate biosynthesis; thiamine phosphate from 4-amino-2-methyl-5-diphosphomethylpyrimidine and 4-methyl-5-(2-phosphoethyl)-thiazole: step 1/1.</text>
</comment>
<comment type="similarity">
    <text evidence="1">Belongs to the thiamine-phosphate synthase family.</text>
</comment>
<reference key="1">
    <citation type="journal article" date="2011" name="Stand. Genomic Sci.">
        <title>Complete genome sequence of 'Thioalkalivibrio sulfidophilus' HL-EbGr7.</title>
        <authorList>
            <person name="Muyzer G."/>
            <person name="Sorokin D.Y."/>
            <person name="Mavromatis K."/>
            <person name="Lapidus A."/>
            <person name="Clum A."/>
            <person name="Ivanova N."/>
            <person name="Pati A."/>
            <person name="d'Haeseleer P."/>
            <person name="Woyke T."/>
            <person name="Kyrpides N.C."/>
        </authorList>
    </citation>
    <scope>NUCLEOTIDE SEQUENCE [LARGE SCALE GENOMIC DNA]</scope>
    <source>
        <strain>HL-EbGR7</strain>
    </source>
</reference>
<gene>
    <name evidence="1" type="primary">thiE</name>
    <name type="ordered locus">Tgr7_2420</name>
</gene>